<reference key="1">
    <citation type="journal article" date="2007" name="Proc. Natl. Acad. Sci. U.S.A.">
        <title>Deep-sea vent epsilon-proteobacterial genomes provide insights into emergence of pathogens.</title>
        <authorList>
            <person name="Nakagawa S."/>
            <person name="Takaki Y."/>
            <person name="Shimamura S."/>
            <person name="Reysenbach A.-L."/>
            <person name="Takai K."/>
            <person name="Horikoshi K."/>
        </authorList>
    </citation>
    <scope>NUCLEOTIDE SEQUENCE [LARGE SCALE GENOMIC DNA]</scope>
    <source>
        <strain>SB155-2</strain>
    </source>
</reference>
<proteinExistence type="inferred from homology"/>
<dbReference type="EMBL" id="AP009178">
    <property type="protein sequence ID" value="BAF70611.1"/>
    <property type="molecule type" value="Genomic_DNA"/>
</dbReference>
<dbReference type="RefSeq" id="WP_012082874.1">
    <property type="nucleotide sequence ID" value="NC_009662.1"/>
</dbReference>
<dbReference type="SMR" id="A6Q552"/>
<dbReference type="FunCoup" id="A6Q552">
    <property type="interactions" value="474"/>
</dbReference>
<dbReference type="STRING" id="387092.NIS_1504"/>
<dbReference type="KEGG" id="nis:NIS_1504"/>
<dbReference type="eggNOG" id="COG0228">
    <property type="taxonomic scope" value="Bacteria"/>
</dbReference>
<dbReference type="HOGENOM" id="CLU_100590_5_1_7"/>
<dbReference type="InParanoid" id="A6Q552"/>
<dbReference type="OrthoDB" id="9807878at2"/>
<dbReference type="Proteomes" id="UP000001118">
    <property type="component" value="Chromosome"/>
</dbReference>
<dbReference type="GO" id="GO:0005737">
    <property type="term" value="C:cytoplasm"/>
    <property type="evidence" value="ECO:0007669"/>
    <property type="project" value="UniProtKB-ARBA"/>
</dbReference>
<dbReference type="GO" id="GO:0015935">
    <property type="term" value="C:small ribosomal subunit"/>
    <property type="evidence" value="ECO:0007669"/>
    <property type="project" value="TreeGrafter"/>
</dbReference>
<dbReference type="GO" id="GO:0003735">
    <property type="term" value="F:structural constituent of ribosome"/>
    <property type="evidence" value="ECO:0007669"/>
    <property type="project" value="InterPro"/>
</dbReference>
<dbReference type="GO" id="GO:0006412">
    <property type="term" value="P:translation"/>
    <property type="evidence" value="ECO:0007669"/>
    <property type="project" value="UniProtKB-UniRule"/>
</dbReference>
<dbReference type="FunFam" id="3.30.1320.10:FF:000005">
    <property type="entry name" value="30S ribosomal protein S16"/>
    <property type="match status" value="1"/>
</dbReference>
<dbReference type="Gene3D" id="3.30.1320.10">
    <property type="match status" value="1"/>
</dbReference>
<dbReference type="HAMAP" id="MF_00385">
    <property type="entry name" value="Ribosomal_bS16"/>
    <property type="match status" value="1"/>
</dbReference>
<dbReference type="InterPro" id="IPR000307">
    <property type="entry name" value="Ribosomal_bS16"/>
</dbReference>
<dbReference type="InterPro" id="IPR020592">
    <property type="entry name" value="Ribosomal_bS16_CS"/>
</dbReference>
<dbReference type="InterPro" id="IPR023803">
    <property type="entry name" value="Ribosomal_bS16_dom_sf"/>
</dbReference>
<dbReference type="NCBIfam" id="TIGR00002">
    <property type="entry name" value="S16"/>
    <property type="match status" value="1"/>
</dbReference>
<dbReference type="PANTHER" id="PTHR12919">
    <property type="entry name" value="30S RIBOSOMAL PROTEIN S16"/>
    <property type="match status" value="1"/>
</dbReference>
<dbReference type="PANTHER" id="PTHR12919:SF20">
    <property type="entry name" value="SMALL RIBOSOMAL SUBUNIT PROTEIN BS16M"/>
    <property type="match status" value="1"/>
</dbReference>
<dbReference type="Pfam" id="PF00886">
    <property type="entry name" value="Ribosomal_S16"/>
    <property type="match status" value="1"/>
</dbReference>
<dbReference type="SUPFAM" id="SSF54565">
    <property type="entry name" value="Ribosomal protein S16"/>
    <property type="match status" value="1"/>
</dbReference>
<dbReference type="PROSITE" id="PS00732">
    <property type="entry name" value="RIBOSOMAL_S16"/>
    <property type="match status" value="1"/>
</dbReference>
<accession>A6Q552</accession>
<name>RS16_NITSB</name>
<evidence type="ECO:0000255" key="1">
    <source>
        <dbReference type="HAMAP-Rule" id="MF_00385"/>
    </source>
</evidence>
<evidence type="ECO:0000305" key="2"/>
<protein>
    <recommendedName>
        <fullName evidence="1">Small ribosomal subunit protein bS16</fullName>
    </recommendedName>
    <alternativeName>
        <fullName evidence="2">30S ribosomal protein S16</fullName>
    </alternativeName>
</protein>
<sequence>MVVIRLARFGRKKRPFYRIVVTDSRKRRDSGWIESIGYYNPLTDPVTVKIDEERLNYWLGVGAKMSERVKKLSGK</sequence>
<gene>
    <name evidence="1" type="primary">rpsP</name>
    <name type="ordered locus">NIS_1504</name>
</gene>
<keyword id="KW-1185">Reference proteome</keyword>
<keyword id="KW-0687">Ribonucleoprotein</keyword>
<keyword id="KW-0689">Ribosomal protein</keyword>
<feature type="chain" id="PRO_1000049303" description="Small ribosomal subunit protein bS16">
    <location>
        <begin position="1"/>
        <end position="75"/>
    </location>
</feature>
<organism>
    <name type="scientific">Nitratiruptor sp. (strain SB155-2)</name>
    <dbReference type="NCBI Taxonomy" id="387092"/>
    <lineage>
        <taxon>Bacteria</taxon>
        <taxon>Pseudomonadati</taxon>
        <taxon>Campylobacterota</taxon>
        <taxon>Epsilonproteobacteria</taxon>
        <taxon>Nautiliales</taxon>
        <taxon>Nitratiruptoraceae</taxon>
        <taxon>Nitratiruptor</taxon>
    </lineage>
</organism>
<comment type="similarity">
    <text evidence="1">Belongs to the bacterial ribosomal protein bS16 family.</text>
</comment>